<proteinExistence type="inferred from homology"/>
<name>SSRP_ECO7I</name>
<gene>
    <name evidence="1" type="primary">smpB</name>
    <name type="ordered locus">ECIAI39_2823</name>
</gene>
<protein>
    <recommendedName>
        <fullName evidence="1">SsrA-binding protein</fullName>
    </recommendedName>
    <alternativeName>
        <fullName evidence="1">Small protein B</fullName>
    </alternativeName>
</protein>
<reference key="1">
    <citation type="journal article" date="2009" name="PLoS Genet.">
        <title>Organised genome dynamics in the Escherichia coli species results in highly diverse adaptive paths.</title>
        <authorList>
            <person name="Touchon M."/>
            <person name="Hoede C."/>
            <person name="Tenaillon O."/>
            <person name="Barbe V."/>
            <person name="Baeriswyl S."/>
            <person name="Bidet P."/>
            <person name="Bingen E."/>
            <person name="Bonacorsi S."/>
            <person name="Bouchier C."/>
            <person name="Bouvet O."/>
            <person name="Calteau A."/>
            <person name="Chiapello H."/>
            <person name="Clermont O."/>
            <person name="Cruveiller S."/>
            <person name="Danchin A."/>
            <person name="Diard M."/>
            <person name="Dossat C."/>
            <person name="Karoui M.E."/>
            <person name="Frapy E."/>
            <person name="Garry L."/>
            <person name="Ghigo J.M."/>
            <person name="Gilles A.M."/>
            <person name="Johnson J."/>
            <person name="Le Bouguenec C."/>
            <person name="Lescat M."/>
            <person name="Mangenot S."/>
            <person name="Martinez-Jehanne V."/>
            <person name="Matic I."/>
            <person name="Nassif X."/>
            <person name="Oztas S."/>
            <person name="Petit M.A."/>
            <person name="Pichon C."/>
            <person name="Rouy Z."/>
            <person name="Ruf C.S."/>
            <person name="Schneider D."/>
            <person name="Tourret J."/>
            <person name="Vacherie B."/>
            <person name="Vallenet D."/>
            <person name="Medigue C."/>
            <person name="Rocha E.P.C."/>
            <person name="Denamur E."/>
        </authorList>
    </citation>
    <scope>NUCLEOTIDE SEQUENCE [LARGE SCALE GENOMIC DNA]</scope>
    <source>
        <strain>IAI39 / ExPEC</strain>
    </source>
</reference>
<accession>B7NSB8</accession>
<keyword id="KW-0963">Cytoplasm</keyword>
<keyword id="KW-0694">RNA-binding</keyword>
<evidence type="ECO:0000255" key="1">
    <source>
        <dbReference type="HAMAP-Rule" id="MF_00023"/>
    </source>
</evidence>
<dbReference type="EMBL" id="CU928164">
    <property type="protein sequence ID" value="CAR18945.1"/>
    <property type="molecule type" value="Genomic_DNA"/>
</dbReference>
<dbReference type="RefSeq" id="WP_000162574.1">
    <property type="nucleotide sequence ID" value="NC_011750.1"/>
</dbReference>
<dbReference type="RefSeq" id="YP_002408760.1">
    <property type="nucleotide sequence ID" value="NC_011750.1"/>
</dbReference>
<dbReference type="SMR" id="B7NSB8"/>
<dbReference type="STRING" id="585057.ECIAI39_2823"/>
<dbReference type="GeneID" id="93774470"/>
<dbReference type="KEGG" id="ect:ECIAI39_2823"/>
<dbReference type="PATRIC" id="fig|585057.6.peg.2930"/>
<dbReference type="HOGENOM" id="CLU_108953_3_0_6"/>
<dbReference type="Proteomes" id="UP000000749">
    <property type="component" value="Chromosome"/>
</dbReference>
<dbReference type="GO" id="GO:0005829">
    <property type="term" value="C:cytosol"/>
    <property type="evidence" value="ECO:0007669"/>
    <property type="project" value="TreeGrafter"/>
</dbReference>
<dbReference type="GO" id="GO:0003723">
    <property type="term" value="F:RNA binding"/>
    <property type="evidence" value="ECO:0007669"/>
    <property type="project" value="UniProtKB-UniRule"/>
</dbReference>
<dbReference type="GO" id="GO:0070929">
    <property type="term" value="P:trans-translation"/>
    <property type="evidence" value="ECO:0007669"/>
    <property type="project" value="UniProtKB-UniRule"/>
</dbReference>
<dbReference type="CDD" id="cd09294">
    <property type="entry name" value="SmpB"/>
    <property type="match status" value="1"/>
</dbReference>
<dbReference type="FunFam" id="2.40.280.10:FF:000001">
    <property type="entry name" value="SsrA-binding protein"/>
    <property type="match status" value="1"/>
</dbReference>
<dbReference type="Gene3D" id="2.40.280.10">
    <property type="match status" value="1"/>
</dbReference>
<dbReference type="HAMAP" id="MF_00023">
    <property type="entry name" value="SmpB"/>
    <property type="match status" value="1"/>
</dbReference>
<dbReference type="InterPro" id="IPR023620">
    <property type="entry name" value="SmpB"/>
</dbReference>
<dbReference type="InterPro" id="IPR000037">
    <property type="entry name" value="SsrA-bd_prot"/>
</dbReference>
<dbReference type="InterPro" id="IPR020081">
    <property type="entry name" value="SsrA-bd_prot_CS"/>
</dbReference>
<dbReference type="NCBIfam" id="NF003843">
    <property type="entry name" value="PRK05422.1"/>
    <property type="match status" value="1"/>
</dbReference>
<dbReference type="NCBIfam" id="TIGR00086">
    <property type="entry name" value="smpB"/>
    <property type="match status" value="1"/>
</dbReference>
<dbReference type="PANTHER" id="PTHR30308:SF2">
    <property type="entry name" value="SSRA-BINDING PROTEIN"/>
    <property type="match status" value="1"/>
</dbReference>
<dbReference type="PANTHER" id="PTHR30308">
    <property type="entry name" value="TMRNA-BINDING COMPONENT OF TRANS-TRANSLATION TAGGING COMPLEX"/>
    <property type="match status" value="1"/>
</dbReference>
<dbReference type="Pfam" id="PF01668">
    <property type="entry name" value="SmpB"/>
    <property type="match status" value="1"/>
</dbReference>
<dbReference type="SUPFAM" id="SSF74982">
    <property type="entry name" value="Small protein B (SmpB)"/>
    <property type="match status" value="1"/>
</dbReference>
<dbReference type="PROSITE" id="PS01317">
    <property type="entry name" value="SSRP"/>
    <property type="match status" value="1"/>
</dbReference>
<comment type="function">
    <text evidence="1">Required for rescue of stalled ribosomes mediated by trans-translation. Binds to transfer-messenger RNA (tmRNA), required for stable association of tmRNA with ribosomes. tmRNA and SmpB together mimic tRNA shape, replacing the anticodon stem-loop with SmpB. tmRNA is encoded by the ssrA gene; the 2 termini fold to resemble tRNA(Ala) and it encodes a 'tag peptide', a short internal open reading frame. During trans-translation Ala-aminoacylated tmRNA acts like a tRNA, entering the A-site of stalled ribosomes, displacing the stalled mRNA. The ribosome then switches to translate the ORF on the tmRNA; the nascent peptide is terminated with the 'tag peptide' encoded by the tmRNA and targeted for degradation. The ribosome is freed to recommence translation, which seems to be the essential function of trans-translation.</text>
</comment>
<comment type="subcellular location">
    <subcellularLocation>
        <location evidence="1">Cytoplasm</location>
    </subcellularLocation>
    <text evidence="1">The tmRNA-SmpB complex associates with stalled 70S ribosomes.</text>
</comment>
<comment type="similarity">
    <text evidence="1">Belongs to the SmpB family.</text>
</comment>
<sequence length="160" mass="18269">MTKKKAHKPGSATIALNKRARHEYFIEEEFEAGLALQGWEVKSLRAGKANISDSYVLLRDGEAFLFGANITPMAVASTHVVCDPTRTRKLLLNQRELDSLYGRVNREGYTVVALSLYWKNAWCKVKIGVAKGKKQHDKRSDIKEREWQVDKARIMKNAHR</sequence>
<organism>
    <name type="scientific">Escherichia coli O7:K1 (strain IAI39 / ExPEC)</name>
    <dbReference type="NCBI Taxonomy" id="585057"/>
    <lineage>
        <taxon>Bacteria</taxon>
        <taxon>Pseudomonadati</taxon>
        <taxon>Pseudomonadota</taxon>
        <taxon>Gammaproteobacteria</taxon>
        <taxon>Enterobacterales</taxon>
        <taxon>Enterobacteriaceae</taxon>
        <taxon>Escherichia</taxon>
    </lineage>
</organism>
<feature type="chain" id="PRO_1000116420" description="SsrA-binding protein">
    <location>
        <begin position="1"/>
        <end position="160"/>
    </location>
</feature>